<comment type="function">
    <text evidence="1">Catalyzes the phosphorylation of the 3'-hydroxyl group of dephosphocoenzyme A to form coenzyme A.</text>
</comment>
<comment type="catalytic activity">
    <reaction evidence="1">
        <text>3'-dephospho-CoA + ATP = ADP + CoA + H(+)</text>
        <dbReference type="Rhea" id="RHEA:18245"/>
        <dbReference type="ChEBI" id="CHEBI:15378"/>
        <dbReference type="ChEBI" id="CHEBI:30616"/>
        <dbReference type="ChEBI" id="CHEBI:57287"/>
        <dbReference type="ChEBI" id="CHEBI:57328"/>
        <dbReference type="ChEBI" id="CHEBI:456216"/>
        <dbReference type="EC" id="2.7.1.24"/>
    </reaction>
</comment>
<comment type="pathway">
    <text evidence="1">Cofactor biosynthesis; coenzyme A biosynthesis; CoA from (R)-pantothenate: step 5/5.</text>
</comment>
<comment type="subcellular location">
    <subcellularLocation>
        <location evidence="1">Cytoplasm</location>
    </subcellularLocation>
</comment>
<comment type="similarity">
    <text evidence="1">Belongs to the CoaE family.</text>
</comment>
<protein>
    <recommendedName>
        <fullName evidence="1">Dephospho-CoA kinase</fullName>
        <ecNumber evidence="1">2.7.1.24</ecNumber>
    </recommendedName>
    <alternativeName>
        <fullName evidence="1">Dephosphocoenzyme A kinase</fullName>
    </alternativeName>
</protein>
<name>COAE_CHRVO</name>
<dbReference type="EC" id="2.7.1.24" evidence="1"/>
<dbReference type="EMBL" id="AE016825">
    <property type="protein sequence ID" value="AAQ61487.1"/>
    <property type="molecule type" value="Genomic_DNA"/>
</dbReference>
<dbReference type="RefSeq" id="WP_011137372.1">
    <property type="nucleotide sequence ID" value="NC_005085.1"/>
</dbReference>
<dbReference type="SMR" id="Q7NRF7"/>
<dbReference type="STRING" id="243365.CV_3825"/>
<dbReference type="KEGG" id="cvi:CV_3825"/>
<dbReference type="eggNOG" id="COG0237">
    <property type="taxonomic scope" value="Bacteria"/>
</dbReference>
<dbReference type="HOGENOM" id="CLU_057180_1_2_4"/>
<dbReference type="OrthoDB" id="9812943at2"/>
<dbReference type="UniPathway" id="UPA00241">
    <property type="reaction ID" value="UER00356"/>
</dbReference>
<dbReference type="Proteomes" id="UP000001424">
    <property type="component" value="Chromosome"/>
</dbReference>
<dbReference type="GO" id="GO:0005737">
    <property type="term" value="C:cytoplasm"/>
    <property type="evidence" value="ECO:0007669"/>
    <property type="project" value="UniProtKB-SubCell"/>
</dbReference>
<dbReference type="GO" id="GO:0005524">
    <property type="term" value="F:ATP binding"/>
    <property type="evidence" value="ECO:0007669"/>
    <property type="project" value="UniProtKB-UniRule"/>
</dbReference>
<dbReference type="GO" id="GO:0004140">
    <property type="term" value="F:dephospho-CoA kinase activity"/>
    <property type="evidence" value="ECO:0007669"/>
    <property type="project" value="UniProtKB-UniRule"/>
</dbReference>
<dbReference type="GO" id="GO:0015937">
    <property type="term" value="P:coenzyme A biosynthetic process"/>
    <property type="evidence" value="ECO:0007669"/>
    <property type="project" value="UniProtKB-UniRule"/>
</dbReference>
<dbReference type="CDD" id="cd02022">
    <property type="entry name" value="DPCK"/>
    <property type="match status" value="1"/>
</dbReference>
<dbReference type="Gene3D" id="3.40.50.300">
    <property type="entry name" value="P-loop containing nucleotide triphosphate hydrolases"/>
    <property type="match status" value="1"/>
</dbReference>
<dbReference type="HAMAP" id="MF_00376">
    <property type="entry name" value="Dephospho_CoA_kinase"/>
    <property type="match status" value="1"/>
</dbReference>
<dbReference type="InterPro" id="IPR001977">
    <property type="entry name" value="Depp_CoAkinase"/>
</dbReference>
<dbReference type="InterPro" id="IPR027417">
    <property type="entry name" value="P-loop_NTPase"/>
</dbReference>
<dbReference type="NCBIfam" id="TIGR00152">
    <property type="entry name" value="dephospho-CoA kinase"/>
    <property type="match status" value="1"/>
</dbReference>
<dbReference type="PANTHER" id="PTHR10695:SF46">
    <property type="entry name" value="BIFUNCTIONAL COENZYME A SYNTHASE-RELATED"/>
    <property type="match status" value="1"/>
</dbReference>
<dbReference type="PANTHER" id="PTHR10695">
    <property type="entry name" value="DEPHOSPHO-COA KINASE-RELATED"/>
    <property type="match status" value="1"/>
</dbReference>
<dbReference type="Pfam" id="PF01121">
    <property type="entry name" value="CoaE"/>
    <property type="match status" value="1"/>
</dbReference>
<dbReference type="SUPFAM" id="SSF52540">
    <property type="entry name" value="P-loop containing nucleoside triphosphate hydrolases"/>
    <property type="match status" value="1"/>
</dbReference>
<dbReference type="PROSITE" id="PS51219">
    <property type="entry name" value="DPCK"/>
    <property type="match status" value="1"/>
</dbReference>
<accession>Q7NRF7</accession>
<feature type="chain" id="PRO_0000172929" description="Dephospho-CoA kinase">
    <location>
        <begin position="1"/>
        <end position="204"/>
    </location>
</feature>
<feature type="domain" description="DPCK" evidence="1">
    <location>
        <begin position="5"/>
        <end position="204"/>
    </location>
</feature>
<feature type="binding site" evidence="1">
    <location>
        <begin position="13"/>
        <end position="18"/>
    </location>
    <ligand>
        <name>ATP</name>
        <dbReference type="ChEBI" id="CHEBI:30616"/>
    </ligand>
</feature>
<reference key="1">
    <citation type="journal article" date="2003" name="Proc. Natl. Acad. Sci. U.S.A.">
        <title>The complete genome sequence of Chromobacterium violaceum reveals remarkable and exploitable bacterial adaptability.</title>
        <authorList>
            <person name="Vasconcelos A.T.R."/>
            <person name="de Almeida D.F."/>
            <person name="Hungria M."/>
            <person name="Guimaraes C.T."/>
            <person name="Antonio R.V."/>
            <person name="Almeida F.C."/>
            <person name="de Almeida L.G.P."/>
            <person name="de Almeida R."/>
            <person name="Alves-Gomes J.A."/>
            <person name="Andrade E.M."/>
            <person name="Araripe J."/>
            <person name="de Araujo M.F.F."/>
            <person name="Astolfi-Filho S."/>
            <person name="Azevedo V."/>
            <person name="Baptista A.J."/>
            <person name="Bataus L.A.M."/>
            <person name="Batista J.S."/>
            <person name="Belo A."/>
            <person name="van den Berg C."/>
            <person name="Bogo M."/>
            <person name="Bonatto S."/>
            <person name="Bordignon J."/>
            <person name="Brigido M.M."/>
            <person name="Brito C.A."/>
            <person name="Brocchi M."/>
            <person name="Burity H.A."/>
            <person name="Camargo A.A."/>
            <person name="Cardoso D.D.P."/>
            <person name="Carneiro N.P."/>
            <person name="Carraro D.M."/>
            <person name="Carvalho C.M.B."/>
            <person name="Cascardo J.C.M."/>
            <person name="Cavada B.S."/>
            <person name="Chueire L.M.O."/>
            <person name="Creczynski-Pasa T.B."/>
            <person name="Cunha-Junior N.C."/>
            <person name="Fagundes N."/>
            <person name="Falcao C.L."/>
            <person name="Fantinatti F."/>
            <person name="Farias I.P."/>
            <person name="Felipe M.S.S."/>
            <person name="Ferrari L.P."/>
            <person name="Ferro J.A."/>
            <person name="Ferro M.I.T."/>
            <person name="Franco G.R."/>
            <person name="Freitas N.S.A."/>
            <person name="Furlan L.R."/>
            <person name="Gazzinelli R.T."/>
            <person name="Gomes E.A."/>
            <person name="Goncalves P.R."/>
            <person name="Grangeiro T.B."/>
            <person name="Grattapaglia D."/>
            <person name="Grisard E.C."/>
            <person name="Hanna E.S."/>
            <person name="Jardim S.N."/>
            <person name="Laurino J."/>
            <person name="Leoi L.C.T."/>
            <person name="Lima L.F.A."/>
            <person name="Loureiro M.F."/>
            <person name="Lyra M.C.C.P."/>
            <person name="Madeira H.M.F."/>
            <person name="Manfio G.P."/>
            <person name="Maranhao A.Q."/>
            <person name="Martins W.S."/>
            <person name="di Mauro S.M.Z."/>
            <person name="de Medeiros S.R.B."/>
            <person name="Meissner R.V."/>
            <person name="Moreira M.A.M."/>
            <person name="Nascimento F.F."/>
            <person name="Nicolas M.F."/>
            <person name="Oliveira J.G."/>
            <person name="Oliveira S.C."/>
            <person name="Paixao R.F.C."/>
            <person name="Parente J.A."/>
            <person name="Pedrosa F.O."/>
            <person name="Pena S.D.J."/>
            <person name="Pereira J.O."/>
            <person name="Pereira M."/>
            <person name="Pinto L.S.R.C."/>
            <person name="Pinto L.S."/>
            <person name="Porto J.I.R."/>
            <person name="Potrich D.P."/>
            <person name="Ramalho-Neto C.E."/>
            <person name="Reis A.M.M."/>
            <person name="Rigo L.U."/>
            <person name="Rondinelli E."/>
            <person name="Santos E.B.P."/>
            <person name="Santos F.R."/>
            <person name="Schneider M.P.C."/>
            <person name="Seuanez H.N."/>
            <person name="Silva A.M.R."/>
            <person name="da Silva A.L.C."/>
            <person name="Silva D.W."/>
            <person name="Silva R."/>
            <person name="Simoes I.C."/>
            <person name="Simon D."/>
            <person name="Soares C.M.A."/>
            <person name="Soares R.B.A."/>
            <person name="Souza E.M."/>
            <person name="Souza K.R.L."/>
            <person name="Souza R.C."/>
            <person name="Steffens M.B.R."/>
            <person name="Steindel M."/>
            <person name="Teixeira S.R."/>
            <person name="Urmenyi T."/>
            <person name="Vettore A."/>
            <person name="Wassem R."/>
            <person name="Zaha A."/>
            <person name="Simpson A.J.G."/>
        </authorList>
    </citation>
    <scope>NUCLEOTIDE SEQUENCE [LARGE SCALE GENOMIC DNA]</scope>
    <source>
        <strain>ATCC 12472 / DSM 30191 / JCM 1249 / CCUG 213 / NBRC 12614 / NCIMB 9131 / NCTC 9757 / MK</strain>
    </source>
</reference>
<evidence type="ECO:0000255" key="1">
    <source>
        <dbReference type="HAMAP-Rule" id="MF_00376"/>
    </source>
</evidence>
<sequence>MAIPVVGLTGGIGSGKSAAADRFAELGVPVIDTDSIAHQLTGPGGAAMTEIVRVFGPGVVAGDGSLDRAAMRARVFAAPEERKRLEAILHPAIHAESVRRLQAAVGDYAVLVVPLLFESDRYAPLLARALVVDCSEEVQVERVMRRSKLSADAVRAIMAAQLPRSERLRRADDVIDNSGGLAELRLQVDAKHSYYLANLVKAML</sequence>
<keyword id="KW-0067">ATP-binding</keyword>
<keyword id="KW-0173">Coenzyme A biosynthesis</keyword>
<keyword id="KW-0963">Cytoplasm</keyword>
<keyword id="KW-0418">Kinase</keyword>
<keyword id="KW-0547">Nucleotide-binding</keyword>
<keyword id="KW-1185">Reference proteome</keyword>
<keyword id="KW-0808">Transferase</keyword>
<proteinExistence type="inferred from homology"/>
<gene>
    <name evidence="1" type="primary">coaE</name>
    <name type="ordered locus">CV_3825</name>
</gene>
<organism>
    <name type="scientific">Chromobacterium violaceum (strain ATCC 12472 / DSM 30191 / JCM 1249 / CCUG 213 / NBRC 12614 / NCIMB 9131 / NCTC 9757 / MK)</name>
    <dbReference type="NCBI Taxonomy" id="243365"/>
    <lineage>
        <taxon>Bacteria</taxon>
        <taxon>Pseudomonadati</taxon>
        <taxon>Pseudomonadota</taxon>
        <taxon>Betaproteobacteria</taxon>
        <taxon>Neisseriales</taxon>
        <taxon>Chromobacteriaceae</taxon>
        <taxon>Chromobacterium</taxon>
    </lineage>
</organism>